<comment type="catalytic activity">
    <reaction>
        <text>(S)-lactate + NAD(+) = pyruvate + NADH + H(+)</text>
        <dbReference type="Rhea" id="RHEA:23444"/>
        <dbReference type="ChEBI" id="CHEBI:15361"/>
        <dbReference type="ChEBI" id="CHEBI:15378"/>
        <dbReference type="ChEBI" id="CHEBI:16651"/>
        <dbReference type="ChEBI" id="CHEBI:57540"/>
        <dbReference type="ChEBI" id="CHEBI:57945"/>
        <dbReference type="EC" id="1.1.1.27"/>
    </reaction>
</comment>
<comment type="pathway">
    <text>Fermentation; pyruvate fermentation to lactate; (S)-lactate from pyruvate: step 1/1.</text>
</comment>
<comment type="subunit">
    <text>Tetramer that arise from random association of LDH-A and LDH-B.</text>
</comment>
<comment type="induction">
    <text>By hypoxia.</text>
</comment>
<comment type="similarity">
    <text evidence="2">Belongs to the LDH/MDH superfamily. LDH family.</text>
</comment>
<reference key="1">
    <citation type="journal article" date="1990" name="Proc. Natl. Acad. Sci. U.S.A.">
        <title>Hypoxically inducible barley lactate dehydrogenase: cDNA cloning and molecular analysis.</title>
        <authorList>
            <person name="Hondred D."/>
            <person name="Hanson A.D."/>
        </authorList>
    </citation>
    <scope>NUCLEOTIDE SEQUENCE [MRNA]</scope>
    <scope>PARTIAL PROTEIN SEQUENCE</scope>
    <source>
        <strain>cv. Himalaya</strain>
        <tissue>Root</tissue>
    </source>
</reference>
<sequence length="356" mass="37749">MHKASSLSELGFDAGGASSGFFRPVADGCPATPTSSAVPHRRLTKISVIGAGNVGMAIAQTILTQNLADEIALVDALPDKLRGEALDLQHAAAFLPRVRISGTDAAVTKNSDLVIVTAGARQIPGETRLNLLQRNVALYRKIVPPVAEHSPDALLLVVSNPVDVLTYVAWKLSGFPASRVIGSGTNLDSSRFRFLIAEHLDVNAQDVQAYMVGEHGDSSVAIWSSISVGGMPAFKSLRDSHRSFDEAALEGIRRAVVGGAYEVIGLKGYTSWAIGYSVASLAASLLRDQRRVHPVSVLASGFHGISDGHEVFLSLPARLGRGGILGVAEMDLTEAEAAQLRRSAKTLWENCQLLDL</sequence>
<accession>P22988</accession>
<organism>
    <name type="scientific">Hordeum vulgare</name>
    <name type="common">Barley</name>
    <dbReference type="NCBI Taxonomy" id="4513"/>
    <lineage>
        <taxon>Eukaryota</taxon>
        <taxon>Viridiplantae</taxon>
        <taxon>Streptophyta</taxon>
        <taxon>Embryophyta</taxon>
        <taxon>Tracheophyta</taxon>
        <taxon>Spermatophyta</taxon>
        <taxon>Magnoliopsida</taxon>
        <taxon>Liliopsida</taxon>
        <taxon>Poales</taxon>
        <taxon>Poaceae</taxon>
        <taxon>BOP clade</taxon>
        <taxon>Pooideae</taxon>
        <taxon>Triticodae</taxon>
        <taxon>Triticeae</taxon>
        <taxon>Hordeinae</taxon>
        <taxon>Hordeum</taxon>
    </lineage>
</organism>
<keyword id="KW-0903">Direct protein sequencing</keyword>
<keyword id="KW-0520">NAD</keyword>
<keyword id="KW-0560">Oxidoreductase</keyword>
<keyword id="KW-0346">Stress response</keyword>
<evidence type="ECO:0000250" key="1"/>
<evidence type="ECO:0000305" key="2"/>
<dbReference type="EC" id="1.1.1.27"/>
<dbReference type="EMBL" id="M55685">
    <property type="protein sequence ID" value="AAA62696.1"/>
    <property type="molecule type" value="mRNA"/>
</dbReference>
<dbReference type="PIR" id="A36070">
    <property type="entry name" value="A36070"/>
</dbReference>
<dbReference type="SMR" id="P22988"/>
<dbReference type="UniPathway" id="UPA00554">
    <property type="reaction ID" value="UER00611"/>
</dbReference>
<dbReference type="ExpressionAtlas" id="P22988">
    <property type="expression patterns" value="baseline and differential"/>
</dbReference>
<dbReference type="GO" id="GO:0005737">
    <property type="term" value="C:cytoplasm"/>
    <property type="evidence" value="ECO:0007669"/>
    <property type="project" value="InterPro"/>
</dbReference>
<dbReference type="GO" id="GO:0004459">
    <property type="term" value="F:L-lactate dehydrogenase activity"/>
    <property type="evidence" value="ECO:0007669"/>
    <property type="project" value="UniProtKB-EC"/>
</dbReference>
<dbReference type="GO" id="GO:0006089">
    <property type="term" value="P:lactate metabolic process"/>
    <property type="evidence" value="ECO:0007669"/>
    <property type="project" value="TreeGrafter"/>
</dbReference>
<dbReference type="CDD" id="cd05293">
    <property type="entry name" value="LDH_1"/>
    <property type="match status" value="1"/>
</dbReference>
<dbReference type="FunFam" id="3.40.50.720:FF:000018">
    <property type="entry name" value="Malate dehydrogenase"/>
    <property type="match status" value="1"/>
</dbReference>
<dbReference type="Gene3D" id="3.90.110.10">
    <property type="entry name" value="Lactate dehydrogenase/glycoside hydrolase, family 4, C-terminal"/>
    <property type="match status" value="1"/>
</dbReference>
<dbReference type="Gene3D" id="3.40.50.720">
    <property type="entry name" value="NAD(P)-binding Rossmann-like Domain"/>
    <property type="match status" value="1"/>
</dbReference>
<dbReference type="HAMAP" id="MF_00488">
    <property type="entry name" value="Lactate_dehydrog"/>
    <property type="match status" value="1"/>
</dbReference>
<dbReference type="InterPro" id="IPR001557">
    <property type="entry name" value="L-lactate/malate_DH"/>
</dbReference>
<dbReference type="InterPro" id="IPR011304">
    <property type="entry name" value="L-lactate_DH"/>
</dbReference>
<dbReference type="InterPro" id="IPR018177">
    <property type="entry name" value="L-lactate_DH_AS"/>
</dbReference>
<dbReference type="InterPro" id="IPR022383">
    <property type="entry name" value="Lactate/malate_DH_C"/>
</dbReference>
<dbReference type="InterPro" id="IPR001236">
    <property type="entry name" value="Lactate/malate_DH_N"/>
</dbReference>
<dbReference type="InterPro" id="IPR015955">
    <property type="entry name" value="Lactate_DH/Glyco_Ohase_4_C"/>
</dbReference>
<dbReference type="InterPro" id="IPR036291">
    <property type="entry name" value="NAD(P)-bd_dom_sf"/>
</dbReference>
<dbReference type="NCBIfam" id="TIGR01771">
    <property type="entry name" value="L-LDH-NAD"/>
    <property type="match status" value="1"/>
</dbReference>
<dbReference type="PANTHER" id="PTHR43128">
    <property type="entry name" value="L-2-HYDROXYCARBOXYLATE DEHYDROGENASE (NAD(P)(+))"/>
    <property type="match status" value="1"/>
</dbReference>
<dbReference type="PANTHER" id="PTHR43128:SF24">
    <property type="entry name" value="LACTATE_MALATE DEHYDROGENASE N-TERMINAL DOMAIN-CONTAINING PROTEIN"/>
    <property type="match status" value="1"/>
</dbReference>
<dbReference type="Pfam" id="PF02866">
    <property type="entry name" value="Ldh_1_C"/>
    <property type="match status" value="1"/>
</dbReference>
<dbReference type="Pfam" id="PF00056">
    <property type="entry name" value="Ldh_1_N"/>
    <property type="match status" value="1"/>
</dbReference>
<dbReference type="PIRSF" id="PIRSF000102">
    <property type="entry name" value="Lac_mal_DH"/>
    <property type="match status" value="1"/>
</dbReference>
<dbReference type="PRINTS" id="PR00086">
    <property type="entry name" value="LLDHDRGNASE"/>
</dbReference>
<dbReference type="SUPFAM" id="SSF56327">
    <property type="entry name" value="LDH C-terminal domain-like"/>
    <property type="match status" value="1"/>
</dbReference>
<dbReference type="SUPFAM" id="SSF51735">
    <property type="entry name" value="NAD(P)-binding Rossmann-fold domains"/>
    <property type="match status" value="1"/>
</dbReference>
<dbReference type="PROSITE" id="PS00064">
    <property type="entry name" value="L_LDH"/>
    <property type="match status" value="1"/>
</dbReference>
<proteinExistence type="evidence at protein level"/>
<protein>
    <recommendedName>
        <fullName>L-lactate dehydrogenase A</fullName>
        <shortName>LDH-A</shortName>
        <ecNumber>1.1.1.27</ecNumber>
    </recommendedName>
</protein>
<name>LDHA_HORVU</name>
<feature type="chain" id="PRO_0000168489" description="L-lactate dehydrogenase A">
    <location>
        <begin position="1"/>
        <end position="356"/>
    </location>
</feature>
<feature type="active site" description="Proton acceptor" evidence="1">
    <location>
        <position position="215"/>
    </location>
</feature>
<feature type="binding site" evidence="1">
    <location>
        <begin position="75"/>
        <end position="80"/>
    </location>
    <ligand>
        <name>NAD(+)</name>
        <dbReference type="ChEBI" id="CHEBI:57540"/>
    </ligand>
</feature>
<feature type="binding site" evidence="1">
    <location>
        <position position="121"/>
    </location>
    <ligand>
        <name>NAD(+)</name>
        <dbReference type="ChEBI" id="CHEBI:57540"/>
    </ligand>
</feature>
<feature type="binding site" evidence="1">
    <location>
        <position position="128"/>
    </location>
    <ligand>
        <name>substrate</name>
    </ligand>
</feature>
<feature type="binding site" evidence="1">
    <location>
        <position position="160"/>
    </location>
    <ligand>
        <name>NAD(+)</name>
        <dbReference type="ChEBI" id="CHEBI:57540"/>
    </ligand>
</feature>
<feature type="binding site" evidence="1">
    <location>
        <position position="160"/>
    </location>
    <ligand>
        <name>substrate</name>
    </ligand>
</feature>
<feature type="binding site" evidence="1">
    <location>
        <position position="191"/>
    </location>
    <ligand>
        <name>substrate</name>
    </ligand>
</feature>
<feature type="binding site" evidence="1">
    <location>
        <position position="270"/>
    </location>
    <ligand>
        <name>substrate</name>
    </ligand>
</feature>